<accession>P45751</accession>
<accession>Q2M758</accession>
<protein>
    <recommendedName>
        <fullName>DNA utilization protein HofO</fullName>
    </recommendedName>
</protein>
<keyword id="KW-0997">Cell inner membrane</keyword>
<keyword id="KW-1003">Cell membrane</keyword>
<keyword id="KW-0472">Membrane</keyword>
<keyword id="KW-1185">Reference proteome</keyword>
<keyword id="KW-0812">Transmembrane</keyword>
<keyword id="KW-1133">Transmembrane helix</keyword>
<comment type="function">
    <text evidence="2">Required for the use of extracellular DNA as a nutrient.</text>
</comment>
<comment type="subcellular location">
    <subcellularLocation>
        <location evidence="3">Cell inner membrane</location>
        <topology evidence="3">Single-pass membrane protein</topology>
    </subcellularLocation>
</comment>
<comment type="disruption phenotype">
    <text evidence="2">Mutants are unable to use DNA as a sole carbon and energy source and show decreased competitive fitness when cocultured with wild-type cells.</text>
</comment>
<gene>
    <name type="primary">hofO</name>
    <name type="synonym">yrfB</name>
    <name type="ordered locus">b3393</name>
    <name type="ordered locus">JW3356</name>
</gene>
<organism>
    <name type="scientific">Escherichia coli (strain K12)</name>
    <dbReference type="NCBI Taxonomy" id="83333"/>
    <lineage>
        <taxon>Bacteria</taxon>
        <taxon>Pseudomonadati</taxon>
        <taxon>Pseudomonadota</taxon>
        <taxon>Gammaproteobacteria</taxon>
        <taxon>Enterobacterales</taxon>
        <taxon>Enterobacteriaceae</taxon>
        <taxon>Escherichia</taxon>
    </lineage>
</organism>
<proteinExistence type="predicted"/>
<feature type="chain" id="PRO_0000169538" description="DNA utilization protein HofO">
    <location>
        <begin position="1"/>
        <end position="146"/>
    </location>
</feature>
<feature type="transmembrane region" description="Helical" evidence="1">
    <location>
        <begin position="20"/>
        <end position="37"/>
    </location>
</feature>
<reference key="1">
    <citation type="journal article" date="1997" name="Science">
        <title>The complete genome sequence of Escherichia coli K-12.</title>
        <authorList>
            <person name="Blattner F.R."/>
            <person name="Plunkett G. III"/>
            <person name="Bloch C.A."/>
            <person name="Perna N.T."/>
            <person name="Burland V."/>
            <person name="Riley M."/>
            <person name="Collado-Vides J."/>
            <person name="Glasner J.D."/>
            <person name="Rode C.K."/>
            <person name="Mayhew G.F."/>
            <person name="Gregor J."/>
            <person name="Davis N.W."/>
            <person name="Kirkpatrick H.A."/>
            <person name="Goeden M.A."/>
            <person name="Rose D.J."/>
            <person name="Mau B."/>
            <person name="Shao Y."/>
        </authorList>
    </citation>
    <scope>NUCLEOTIDE SEQUENCE [LARGE SCALE GENOMIC DNA]</scope>
    <source>
        <strain>K12 / MG1655 / ATCC 47076</strain>
    </source>
</reference>
<reference key="2">
    <citation type="journal article" date="2006" name="Mol. Syst. Biol.">
        <title>Highly accurate genome sequences of Escherichia coli K-12 strains MG1655 and W3110.</title>
        <authorList>
            <person name="Hayashi K."/>
            <person name="Morooka N."/>
            <person name="Yamamoto Y."/>
            <person name="Fujita K."/>
            <person name="Isono K."/>
            <person name="Choi S."/>
            <person name="Ohtsubo E."/>
            <person name="Baba T."/>
            <person name="Wanner B.L."/>
            <person name="Mori H."/>
            <person name="Horiuchi T."/>
        </authorList>
    </citation>
    <scope>NUCLEOTIDE SEQUENCE [LARGE SCALE GENOMIC DNA]</scope>
    <source>
        <strain>K12 / W3110 / ATCC 27325 / DSM 5911</strain>
    </source>
</reference>
<reference key="3">
    <citation type="journal article" date="2006" name="J. Bacteriol.">
        <title>Escherichia coli competence gene homologs are essential for competitive fitness and the use of DNA as a nutrient.</title>
        <authorList>
            <person name="Palchevskiy V."/>
            <person name="Finkel S.E."/>
        </authorList>
    </citation>
    <scope>FUNCTION</scope>
    <scope>DISRUPTION PHENOTYPE</scope>
    <source>
        <strain>K12 / W3110 / ZK126</strain>
    </source>
</reference>
<name>HOFO_ECOLI</name>
<evidence type="ECO:0000255" key="1"/>
<evidence type="ECO:0000269" key="2">
    <source>
    </source>
</evidence>
<evidence type="ECO:0000305" key="3"/>
<dbReference type="EMBL" id="U18997">
    <property type="protein sequence ID" value="AAA58190.1"/>
    <property type="molecule type" value="Genomic_DNA"/>
</dbReference>
<dbReference type="EMBL" id="U00096">
    <property type="protein sequence ID" value="AAC76418.1"/>
    <property type="molecule type" value="Genomic_DNA"/>
</dbReference>
<dbReference type="EMBL" id="AP009048">
    <property type="protein sequence ID" value="BAE77898.1"/>
    <property type="molecule type" value="Genomic_DNA"/>
</dbReference>
<dbReference type="PIR" id="D65134">
    <property type="entry name" value="D65134"/>
</dbReference>
<dbReference type="RefSeq" id="NP_417852.1">
    <property type="nucleotide sequence ID" value="NC_000913.3"/>
</dbReference>
<dbReference type="RefSeq" id="WP_001055759.1">
    <property type="nucleotide sequence ID" value="NZ_LN832404.1"/>
</dbReference>
<dbReference type="SMR" id="P45751"/>
<dbReference type="BioGRID" id="4262484">
    <property type="interactions" value="9"/>
</dbReference>
<dbReference type="DIP" id="DIP-12919N"/>
<dbReference type="FunCoup" id="P45751">
    <property type="interactions" value="65"/>
</dbReference>
<dbReference type="IntAct" id="P45751">
    <property type="interactions" value="4"/>
</dbReference>
<dbReference type="STRING" id="511145.b3393"/>
<dbReference type="PaxDb" id="511145-b3393"/>
<dbReference type="EnsemblBacteria" id="AAC76418">
    <property type="protein sequence ID" value="AAC76418"/>
    <property type="gene ID" value="b3393"/>
</dbReference>
<dbReference type="GeneID" id="947899"/>
<dbReference type="KEGG" id="ecj:JW3356"/>
<dbReference type="KEGG" id="eco:b3393"/>
<dbReference type="KEGG" id="ecoc:C3026_18410"/>
<dbReference type="PATRIC" id="fig|1411691.4.peg.3337"/>
<dbReference type="EchoBASE" id="EB2759"/>
<dbReference type="eggNOG" id="ENOG5032UHA">
    <property type="taxonomic scope" value="Bacteria"/>
</dbReference>
<dbReference type="HOGENOM" id="CLU_117126_0_0_6"/>
<dbReference type="InParanoid" id="P45751"/>
<dbReference type="OMA" id="WLARCGM"/>
<dbReference type="OrthoDB" id="6564173at2"/>
<dbReference type="PhylomeDB" id="P45751"/>
<dbReference type="BioCyc" id="EcoCyc:G7737-MONOMER"/>
<dbReference type="PRO" id="PR:P45751"/>
<dbReference type="Proteomes" id="UP000000625">
    <property type="component" value="Chromosome"/>
</dbReference>
<dbReference type="GO" id="GO:0005886">
    <property type="term" value="C:plasma membrane"/>
    <property type="evidence" value="ECO:0007669"/>
    <property type="project" value="UniProtKB-SubCell"/>
</dbReference>
<dbReference type="GO" id="GO:0015976">
    <property type="term" value="P:carbon utilization"/>
    <property type="evidence" value="ECO:0000315"/>
    <property type="project" value="EcoCyc"/>
</dbReference>
<dbReference type="GO" id="GO:0006308">
    <property type="term" value="P:DNA catabolic process"/>
    <property type="evidence" value="ECO:0000315"/>
    <property type="project" value="EcoCyc"/>
</dbReference>
<dbReference type="Pfam" id="PF25319">
    <property type="entry name" value="HofO"/>
    <property type="match status" value="1"/>
</dbReference>
<sequence>MNMFFDWWFATSPRLRQLCWAFWLLMLVTLIFLSSTHHEERDALIRLRASHHQQWAALYRLVDTAPFSEEKTLPFSPLDFQLSGAQLVSWHPSAQGGELALKTLWEAVPSAFTRLAERNVSVSRFSLSVEGDDLLFTLQLETPHEG</sequence>